<dbReference type="EC" id="2.4.1.182" evidence="1"/>
<dbReference type="EMBL" id="CP000034">
    <property type="protein sequence ID" value="ABB60430.1"/>
    <property type="molecule type" value="Genomic_DNA"/>
</dbReference>
<dbReference type="RefSeq" id="WP_000139657.1">
    <property type="nucleotide sequence ID" value="NC_007606.1"/>
</dbReference>
<dbReference type="RefSeq" id="YP_401919.1">
    <property type="nucleotide sequence ID" value="NC_007606.1"/>
</dbReference>
<dbReference type="SMR" id="Q32JS7"/>
<dbReference type="STRING" id="300267.SDY_0198"/>
<dbReference type="CAZy" id="GT19">
    <property type="family name" value="Glycosyltransferase Family 19"/>
</dbReference>
<dbReference type="EnsemblBacteria" id="ABB60430">
    <property type="protein sequence ID" value="ABB60430"/>
    <property type="gene ID" value="SDY_0198"/>
</dbReference>
<dbReference type="KEGG" id="sdy:SDY_0198"/>
<dbReference type="PATRIC" id="fig|300267.13.peg.229"/>
<dbReference type="HOGENOM" id="CLU_036577_3_0_6"/>
<dbReference type="UniPathway" id="UPA00359">
    <property type="reaction ID" value="UER00481"/>
</dbReference>
<dbReference type="Proteomes" id="UP000002716">
    <property type="component" value="Chromosome"/>
</dbReference>
<dbReference type="GO" id="GO:0016020">
    <property type="term" value="C:membrane"/>
    <property type="evidence" value="ECO:0007669"/>
    <property type="project" value="GOC"/>
</dbReference>
<dbReference type="GO" id="GO:0008915">
    <property type="term" value="F:lipid-A-disaccharide synthase activity"/>
    <property type="evidence" value="ECO:0007669"/>
    <property type="project" value="UniProtKB-UniRule"/>
</dbReference>
<dbReference type="GO" id="GO:0005543">
    <property type="term" value="F:phospholipid binding"/>
    <property type="evidence" value="ECO:0007669"/>
    <property type="project" value="TreeGrafter"/>
</dbReference>
<dbReference type="GO" id="GO:0009245">
    <property type="term" value="P:lipid A biosynthetic process"/>
    <property type="evidence" value="ECO:0007669"/>
    <property type="project" value="UniProtKB-UniRule"/>
</dbReference>
<dbReference type="CDD" id="cd01635">
    <property type="entry name" value="Glycosyltransferase_GTB-type"/>
    <property type="match status" value="1"/>
</dbReference>
<dbReference type="HAMAP" id="MF_00392">
    <property type="entry name" value="LpxB"/>
    <property type="match status" value="1"/>
</dbReference>
<dbReference type="InterPro" id="IPR003835">
    <property type="entry name" value="Glyco_trans_19"/>
</dbReference>
<dbReference type="NCBIfam" id="TIGR00215">
    <property type="entry name" value="lpxB"/>
    <property type="match status" value="1"/>
</dbReference>
<dbReference type="PANTHER" id="PTHR30372">
    <property type="entry name" value="LIPID-A-DISACCHARIDE SYNTHASE"/>
    <property type="match status" value="1"/>
</dbReference>
<dbReference type="PANTHER" id="PTHR30372:SF4">
    <property type="entry name" value="LIPID-A-DISACCHARIDE SYNTHASE, MITOCHONDRIAL-RELATED"/>
    <property type="match status" value="1"/>
</dbReference>
<dbReference type="Pfam" id="PF02684">
    <property type="entry name" value="LpxB"/>
    <property type="match status" value="1"/>
</dbReference>
<dbReference type="SUPFAM" id="SSF53756">
    <property type="entry name" value="UDP-Glycosyltransferase/glycogen phosphorylase"/>
    <property type="match status" value="1"/>
</dbReference>
<name>LPXB_SHIDS</name>
<comment type="function">
    <text evidence="1">Condensation of UDP-2,3-diacylglucosamine and 2,3-diacylglucosamine-1-phosphate to form lipid A disaccharide, a precursor of lipid A, a phosphorylated glycolipid that anchors the lipopolysaccharide to the outer membrane of the cell.</text>
</comment>
<comment type="catalytic activity">
    <reaction evidence="1">
        <text>2-N,3-O-bis[(3R)-3-hydroxytetradecanoyl]-alpha-D-glucosaminyl 1-phosphate + UDP-2-N,3-O-bis[(3R)-3-hydroxytetradecanoyl]-alpha-D-glucosamine = lipid A disaccharide (E. coli) + UDP + H(+)</text>
        <dbReference type="Rhea" id="RHEA:22668"/>
        <dbReference type="ChEBI" id="CHEBI:15378"/>
        <dbReference type="ChEBI" id="CHEBI:57957"/>
        <dbReference type="ChEBI" id="CHEBI:58223"/>
        <dbReference type="ChEBI" id="CHEBI:58466"/>
        <dbReference type="ChEBI" id="CHEBI:78847"/>
    </reaction>
</comment>
<comment type="catalytic activity">
    <reaction evidence="1">
        <text>a lipid X + a UDP-2-N,3-O-bis[(3R)-3-hydroxyacyl]-alpha-D-glucosamine = a lipid A disaccharide + UDP + H(+)</text>
        <dbReference type="Rhea" id="RHEA:67828"/>
        <dbReference type="ChEBI" id="CHEBI:15378"/>
        <dbReference type="ChEBI" id="CHEBI:58223"/>
        <dbReference type="ChEBI" id="CHEBI:137748"/>
        <dbReference type="ChEBI" id="CHEBI:176338"/>
        <dbReference type="ChEBI" id="CHEBI:176343"/>
        <dbReference type="EC" id="2.4.1.182"/>
    </reaction>
</comment>
<comment type="pathway">
    <text evidence="1">Glycolipid biosynthesis; lipid IV(A) biosynthesis; lipid IV(A) from (3R)-3-hydroxytetradecanoyl-[acyl-carrier-protein] and UDP-N-acetyl-alpha-D-glucosamine: step 5/6.</text>
</comment>
<comment type="similarity">
    <text evidence="1">Belongs to the LpxB family.</text>
</comment>
<sequence length="382" mass="42351">MTEQRPLTIALVAGETSGDILGAGLIRALKERVPNARFVGVAGPRMQAEGCEAWYEIEELAVMGIVEVLGRLRRLLHIHADLTKRFGELKPDVFVGIDAPDFNITLEGNLKKQGIKTIHYVSPSVWAWRQKRVFKIGRATDLVLAFLPFEKAFYDKYNVPCRFIGHTMADAMPLDPDKNAARDVLGIPHDTHCLALLPGSRGAEVEMLSADFLKTAQLLRQTYPDLEIVVPLVNAKRREQFERIKAEVAPDLSVHLLDGMGREAMVASDAALLASGTAALECMLAKCPMVVGYRMKPFTFWLAKLLVKTDYVSLPNLLAGRELVKELLQEECEPQKLAAALLPLLANGKTSHAMHDTFRELHQQIRCNADEQAAQAVLELAQ</sequence>
<proteinExistence type="inferred from homology"/>
<gene>
    <name evidence="1" type="primary">lpxB</name>
    <name type="ordered locus">SDY_0198</name>
</gene>
<reference key="1">
    <citation type="journal article" date="2005" name="Nucleic Acids Res.">
        <title>Genome dynamics and diversity of Shigella species, the etiologic agents of bacillary dysentery.</title>
        <authorList>
            <person name="Yang F."/>
            <person name="Yang J."/>
            <person name="Zhang X."/>
            <person name="Chen L."/>
            <person name="Jiang Y."/>
            <person name="Yan Y."/>
            <person name="Tang X."/>
            <person name="Wang J."/>
            <person name="Xiong Z."/>
            <person name="Dong J."/>
            <person name="Xue Y."/>
            <person name="Zhu Y."/>
            <person name="Xu X."/>
            <person name="Sun L."/>
            <person name="Chen S."/>
            <person name="Nie H."/>
            <person name="Peng J."/>
            <person name="Xu J."/>
            <person name="Wang Y."/>
            <person name="Yuan Z."/>
            <person name="Wen Y."/>
            <person name="Yao Z."/>
            <person name="Shen Y."/>
            <person name="Qiang B."/>
            <person name="Hou Y."/>
            <person name="Yu J."/>
            <person name="Jin Q."/>
        </authorList>
    </citation>
    <scope>NUCLEOTIDE SEQUENCE [LARGE SCALE GENOMIC DNA]</scope>
    <source>
        <strain>Sd197</strain>
    </source>
</reference>
<feature type="chain" id="PRO_0000255224" description="Lipid-A-disaccharide synthase">
    <location>
        <begin position="1"/>
        <end position="382"/>
    </location>
</feature>
<organism>
    <name type="scientific">Shigella dysenteriae serotype 1 (strain Sd197)</name>
    <dbReference type="NCBI Taxonomy" id="300267"/>
    <lineage>
        <taxon>Bacteria</taxon>
        <taxon>Pseudomonadati</taxon>
        <taxon>Pseudomonadota</taxon>
        <taxon>Gammaproteobacteria</taxon>
        <taxon>Enterobacterales</taxon>
        <taxon>Enterobacteriaceae</taxon>
        <taxon>Shigella</taxon>
    </lineage>
</organism>
<keyword id="KW-0328">Glycosyltransferase</keyword>
<keyword id="KW-0441">Lipid A biosynthesis</keyword>
<keyword id="KW-0444">Lipid biosynthesis</keyword>
<keyword id="KW-0443">Lipid metabolism</keyword>
<keyword id="KW-1185">Reference proteome</keyword>
<keyword id="KW-0808">Transferase</keyword>
<evidence type="ECO:0000255" key="1">
    <source>
        <dbReference type="HAMAP-Rule" id="MF_00392"/>
    </source>
</evidence>
<accession>Q32JS7</accession>
<protein>
    <recommendedName>
        <fullName evidence="1">Lipid-A-disaccharide synthase</fullName>
        <ecNumber evidence="1">2.4.1.182</ecNumber>
    </recommendedName>
</protein>